<organism>
    <name type="scientific">Streptococcus pyogenes serotype M3 (strain ATCC BAA-595 / MGAS315)</name>
    <dbReference type="NCBI Taxonomy" id="198466"/>
    <lineage>
        <taxon>Bacteria</taxon>
        <taxon>Bacillati</taxon>
        <taxon>Bacillota</taxon>
        <taxon>Bacilli</taxon>
        <taxon>Lactobacillales</taxon>
        <taxon>Streptococcaceae</taxon>
        <taxon>Streptococcus</taxon>
    </lineage>
</organism>
<accession>P0DE70</accession>
<accession>P66425</accession>
<accession>Q99Y47</accession>
<reference key="1">
    <citation type="journal article" date="2002" name="Proc. Natl. Acad. Sci. U.S.A.">
        <title>Genome sequence of a serotype M3 strain of group A Streptococcus: phage-encoded toxins, the high-virulence phenotype, and clone emergence.</title>
        <authorList>
            <person name="Beres S.B."/>
            <person name="Sylva G.L."/>
            <person name="Barbian K.D."/>
            <person name="Lei B."/>
            <person name="Hoff J.S."/>
            <person name="Mammarella N.D."/>
            <person name="Liu M.-Y."/>
            <person name="Smoot J.C."/>
            <person name="Porcella S.F."/>
            <person name="Parkins L.D."/>
            <person name="Campbell D.S."/>
            <person name="Smith T.M."/>
            <person name="McCormick J.K."/>
            <person name="Leung D.Y.M."/>
            <person name="Schlievert P.M."/>
            <person name="Musser J.M."/>
        </authorList>
    </citation>
    <scope>NUCLEOTIDE SEQUENCE [LARGE SCALE GENOMIC DNA]</scope>
    <source>
        <strain>ATCC BAA-595 / MGAS315</strain>
    </source>
</reference>
<gene>
    <name evidence="1" type="primary">rpsN</name>
    <name type="synonym">rpsN.2</name>
    <name type="synonym">rpsN2</name>
    <name type="synonym">rs14</name>
    <name type="ordered locus">SpyM3_1615</name>
</gene>
<comment type="function">
    <text evidence="1">Binds 16S rRNA, required for the assembly of 30S particles and may also be responsible for determining the conformation of the 16S rRNA at the A site.</text>
</comment>
<comment type="subunit">
    <text evidence="1">Part of the 30S ribosomal subunit. Contacts proteins S3 and S10.</text>
</comment>
<comment type="similarity">
    <text evidence="1">Belongs to the universal ribosomal protein uS14 family.</text>
</comment>
<evidence type="ECO:0000255" key="1">
    <source>
        <dbReference type="HAMAP-Rule" id="MF_00537"/>
    </source>
</evidence>
<evidence type="ECO:0000256" key="2">
    <source>
        <dbReference type="SAM" id="MobiDB-lite"/>
    </source>
</evidence>
<evidence type="ECO:0000305" key="3"/>
<keyword id="KW-0687">Ribonucleoprotein</keyword>
<keyword id="KW-0689">Ribosomal protein</keyword>
<keyword id="KW-0694">RNA-binding</keyword>
<keyword id="KW-0699">rRNA-binding</keyword>
<protein>
    <recommendedName>
        <fullName evidence="1">Small ribosomal subunit protein uS14A</fullName>
    </recommendedName>
    <alternativeName>
        <fullName evidence="3">30S ribosomal protein S14</fullName>
    </alternativeName>
</protein>
<sequence length="89" mass="10454">MAKKSKIAKYQKQLQLIEQYADLRRDLKAKGDYESLRKLPRDSNPNRLKNRDKIDGRPHAYMRKFGVSRINFRDLAHKGQLPGVTKASW</sequence>
<proteinExistence type="inferred from homology"/>
<dbReference type="EMBL" id="AE014074">
    <property type="protein sequence ID" value="AAM80222.1"/>
    <property type="molecule type" value="Genomic_DNA"/>
</dbReference>
<dbReference type="RefSeq" id="WP_002982921.1">
    <property type="nucleotide sequence ID" value="NC_004070.1"/>
</dbReference>
<dbReference type="SMR" id="P0DE70"/>
<dbReference type="GeneID" id="69900252"/>
<dbReference type="KEGG" id="spg:SpyM3_1615"/>
<dbReference type="HOGENOM" id="CLU_139869_0_0_9"/>
<dbReference type="Proteomes" id="UP000000564">
    <property type="component" value="Chromosome"/>
</dbReference>
<dbReference type="GO" id="GO:0005737">
    <property type="term" value="C:cytoplasm"/>
    <property type="evidence" value="ECO:0007669"/>
    <property type="project" value="UniProtKB-ARBA"/>
</dbReference>
<dbReference type="GO" id="GO:0015935">
    <property type="term" value="C:small ribosomal subunit"/>
    <property type="evidence" value="ECO:0007669"/>
    <property type="project" value="TreeGrafter"/>
</dbReference>
<dbReference type="GO" id="GO:0019843">
    <property type="term" value="F:rRNA binding"/>
    <property type="evidence" value="ECO:0007669"/>
    <property type="project" value="UniProtKB-UniRule"/>
</dbReference>
<dbReference type="GO" id="GO:0003735">
    <property type="term" value="F:structural constituent of ribosome"/>
    <property type="evidence" value="ECO:0007669"/>
    <property type="project" value="InterPro"/>
</dbReference>
<dbReference type="GO" id="GO:0006412">
    <property type="term" value="P:translation"/>
    <property type="evidence" value="ECO:0007669"/>
    <property type="project" value="UniProtKB-UniRule"/>
</dbReference>
<dbReference type="Gene3D" id="4.10.830.10">
    <property type="entry name" value="30s Ribosomal Protein S14, Chain N"/>
    <property type="match status" value="1"/>
</dbReference>
<dbReference type="HAMAP" id="MF_00537">
    <property type="entry name" value="Ribosomal_uS14_1"/>
    <property type="match status" value="1"/>
</dbReference>
<dbReference type="InterPro" id="IPR001209">
    <property type="entry name" value="Ribosomal_uS14"/>
</dbReference>
<dbReference type="InterPro" id="IPR023036">
    <property type="entry name" value="Ribosomal_uS14_bac/plastid"/>
</dbReference>
<dbReference type="InterPro" id="IPR043140">
    <property type="entry name" value="Ribosomal_uS14_sf"/>
</dbReference>
<dbReference type="NCBIfam" id="NF006477">
    <property type="entry name" value="PRK08881.1"/>
    <property type="match status" value="1"/>
</dbReference>
<dbReference type="PANTHER" id="PTHR19836">
    <property type="entry name" value="30S RIBOSOMAL PROTEIN S14"/>
    <property type="match status" value="1"/>
</dbReference>
<dbReference type="PANTHER" id="PTHR19836:SF19">
    <property type="entry name" value="SMALL RIBOSOMAL SUBUNIT PROTEIN US14M"/>
    <property type="match status" value="1"/>
</dbReference>
<dbReference type="Pfam" id="PF00253">
    <property type="entry name" value="Ribosomal_S14"/>
    <property type="match status" value="1"/>
</dbReference>
<dbReference type="SUPFAM" id="SSF57716">
    <property type="entry name" value="Glucocorticoid receptor-like (DNA-binding domain)"/>
    <property type="match status" value="1"/>
</dbReference>
<feature type="chain" id="PRO_0000130946" description="Small ribosomal subunit protein uS14A">
    <location>
        <begin position="1"/>
        <end position="89"/>
    </location>
</feature>
<feature type="region of interest" description="Disordered" evidence="2">
    <location>
        <begin position="34"/>
        <end position="54"/>
    </location>
</feature>
<name>RS14_STRP3</name>